<organism>
    <name type="scientific">Nitrosomonas eutropha (strain DSM 101675 / C91 / Nm57)</name>
    <dbReference type="NCBI Taxonomy" id="335283"/>
    <lineage>
        <taxon>Bacteria</taxon>
        <taxon>Pseudomonadati</taxon>
        <taxon>Pseudomonadota</taxon>
        <taxon>Betaproteobacteria</taxon>
        <taxon>Nitrosomonadales</taxon>
        <taxon>Nitrosomonadaceae</taxon>
        <taxon>Nitrosomonas</taxon>
    </lineage>
</organism>
<keyword id="KW-0963">Cytoplasm</keyword>
<keyword id="KW-0269">Exonuclease</keyword>
<keyword id="KW-0378">Hydrolase</keyword>
<keyword id="KW-0540">Nuclease</keyword>
<evidence type="ECO:0000255" key="1">
    <source>
        <dbReference type="HAMAP-Rule" id="MF_00378"/>
    </source>
</evidence>
<protein>
    <recommendedName>
        <fullName evidence="1">Exodeoxyribonuclease 7 large subunit</fullName>
        <ecNumber evidence="1">3.1.11.6</ecNumber>
    </recommendedName>
    <alternativeName>
        <fullName evidence="1">Exodeoxyribonuclease VII large subunit</fullName>
        <shortName evidence="1">Exonuclease VII large subunit</shortName>
    </alternativeName>
</protein>
<reference key="1">
    <citation type="journal article" date="2007" name="Environ. Microbiol.">
        <title>Whole-genome analysis of the ammonia-oxidizing bacterium, Nitrosomonas eutropha C91: implications for niche adaptation.</title>
        <authorList>
            <person name="Stein L.Y."/>
            <person name="Arp D.J."/>
            <person name="Berube P.M."/>
            <person name="Chain P.S."/>
            <person name="Hauser L."/>
            <person name="Jetten M.S."/>
            <person name="Klotz M.G."/>
            <person name="Larimer F.W."/>
            <person name="Norton J.M."/>
            <person name="Op den Camp H.J.M."/>
            <person name="Shin M."/>
            <person name="Wei X."/>
        </authorList>
    </citation>
    <scope>NUCLEOTIDE SEQUENCE [LARGE SCALE GENOMIC DNA]</scope>
    <source>
        <strain>DSM 101675 / C91 / Nm57</strain>
    </source>
</reference>
<dbReference type="EC" id="3.1.11.6" evidence="1"/>
<dbReference type="EMBL" id="CP000450">
    <property type="protein sequence ID" value="ABI59755.1"/>
    <property type="molecule type" value="Genomic_DNA"/>
</dbReference>
<dbReference type="RefSeq" id="WP_011634561.1">
    <property type="nucleotide sequence ID" value="NC_008344.1"/>
</dbReference>
<dbReference type="SMR" id="Q0AFX7"/>
<dbReference type="STRING" id="335283.Neut_1510"/>
<dbReference type="KEGG" id="net:Neut_1510"/>
<dbReference type="eggNOG" id="COG1570">
    <property type="taxonomic scope" value="Bacteria"/>
</dbReference>
<dbReference type="HOGENOM" id="CLU_023625_3_1_4"/>
<dbReference type="OrthoDB" id="9802795at2"/>
<dbReference type="Proteomes" id="UP000001966">
    <property type="component" value="Chromosome"/>
</dbReference>
<dbReference type="GO" id="GO:0005737">
    <property type="term" value="C:cytoplasm"/>
    <property type="evidence" value="ECO:0007669"/>
    <property type="project" value="UniProtKB-SubCell"/>
</dbReference>
<dbReference type="GO" id="GO:0009318">
    <property type="term" value="C:exodeoxyribonuclease VII complex"/>
    <property type="evidence" value="ECO:0007669"/>
    <property type="project" value="InterPro"/>
</dbReference>
<dbReference type="GO" id="GO:0008855">
    <property type="term" value="F:exodeoxyribonuclease VII activity"/>
    <property type="evidence" value="ECO:0007669"/>
    <property type="project" value="UniProtKB-UniRule"/>
</dbReference>
<dbReference type="GO" id="GO:0003676">
    <property type="term" value="F:nucleic acid binding"/>
    <property type="evidence" value="ECO:0007669"/>
    <property type="project" value="InterPro"/>
</dbReference>
<dbReference type="GO" id="GO:0006308">
    <property type="term" value="P:DNA catabolic process"/>
    <property type="evidence" value="ECO:0007669"/>
    <property type="project" value="UniProtKB-UniRule"/>
</dbReference>
<dbReference type="CDD" id="cd04489">
    <property type="entry name" value="ExoVII_LU_OBF"/>
    <property type="match status" value="1"/>
</dbReference>
<dbReference type="HAMAP" id="MF_00378">
    <property type="entry name" value="Exonuc_7_L"/>
    <property type="match status" value="1"/>
</dbReference>
<dbReference type="InterPro" id="IPR003753">
    <property type="entry name" value="Exonuc_VII_L"/>
</dbReference>
<dbReference type="InterPro" id="IPR020579">
    <property type="entry name" value="Exonuc_VII_lsu_C"/>
</dbReference>
<dbReference type="InterPro" id="IPR025824">
    <property type="entry name" value="OB-fold_nuc-bd_dom"/>
</dbReference>
<dbReference type="NCBIfam" id="TIGR00237">
    <property type="entry name" value="xseA"/>
    <property type="match status" value="1"/>
</dbReference>
<dbReference type="PANTHER" id="PTHR30008">
    <property type="entry name" value="EXODEOXYRIBONUCLEASE 7 LARGE SUBUNIT"/>
    <property type="match status" value="1"/>
</dbReference>
<dbReference type="PANTHER" id="PTHR30008:SF0">
    <property type="entry name" value="EXODEOXYRIBONUCLEASE 7 LARGE SUBUNIT"/>
    <property type="match status" value="1"/>
</dbReference>
<dbReference type="Pfam" id="PF02601">
    <property type="entry name" value="Exonuc_VII_L"/>
    <property type="match status" value="1"/>
</dbReference>
<dbReference type="Pfam" id="PF13742">
    <property type="entry name" value="tRNA_anti_2"/>
    <property type="match status" value="1"/>
</dbReference>
<proteinExistence type="inferred from homology"/>
<comment type="function">
    <text evidence="1">Bidirectionally degrades single-stranded DNA into large acid-insoluble oligonucleotides, which are then degraded further into small acid-soluble oligonucleotides.</text>
</comment>
<comment type="catalytic activity">
    <reaction evidence="1">
        <text>Exonucleolytic cleavage in either 5'- to 3'- or 3'- to 5'-direction to yield nucleoside 5'-phosphates.</text>
        <dbReference type="EC" id="3.1.11.6"/>
    </reaction>
</comment>
<comment type="subunit">
    <text evidence="1">Heterooligomer composed of large and small subunits.</text>
</comment>
<comment type="subcellular location">
    <subcellularLocation>
        <location evidence="1">Cytoplasm</location>
    </subcellularLocation>
</comment>
<comment type="similarity">
    <text evidence="1">Belongs to the XseA family.</text>
</comment>
<feature type="chain" id="PRO_1000060029" description="Exodeoxyribonuclease 7 large subunit">
    <location>
        <begin position="1"/>
        <end position="448"/>
    </location>
</feature>
<accession>Q0AFX7</accession>
<gene>
    <name evidence="1" type="primary">xseA</name>
    <name type="ordered locus">Neut_1510</name>
</gene>
<sequence>MTDNNLFPEPKKIVWRVSELNRHVRVILEQTFPLLWVSGEISNLKRYPSGHWYFSLKDDNAQVRCVMFRHKNMYLDWMPQDGAQVEAQALITLYEARGEFQLTIERLRRAGLGVLFETFERLKTRLQQEGLFNPEYKQLIPPYPQQIGIITSTNTAALRDVLTTLQRRLPSLPVVIYPAPVQGKEAASAIVTALQIATQRSECDVLILCRGGGSIEDLWAFNEEIVARAIAACPIPIVTGIGHETDFTIADFVADMRAPTPTGAAQLAAPDRQDILHRLQYWQHRLQQAIERNIERRMQTTDLLAHRLVHPGERIRYQLIHLSQLHNRLLHAWSRQLEVCKWRIEAFRRRIQFTKPDINTGKRYQQELAARLQRAMVYRLESLQVQLIRQQQHLAHLDPKAVLERGYSITYTAGGEILQDSQQIHTGDNVQIVFAKGSAKANITETNK</sequence>
<name>EX7L_NITEC</name>